<accession>Q60317</accession>
<dbReference type="EC" id="2.6.1.1"/>
<dbReference type="EMBL" id="L77117">
    <property type="protein sequence ID" value="AAB97984.1"/>
    <property type="molecule type" value="Genomic_DNA"/>
</dbReference>
<dbReference type="PIR" id="A64300">
    <property type="entry name" value="A64300"/>
</dbReference>
<dbReference type="RefSeq" id="WP_010869494.1">
    <property type="nucleotide sequence ID" value="NC_000909.1"/>
</dbReference>
<dbReference type="SMR" id="Q60317"/>
<dbReference type="FunCoup" id="Q60317">
    <property type="interactions" value="232"/>
</dbReference>
<dbReference type="STRING" id="243232.MJ_0001"/>
<dbReference type="PaxDb" id="243232-MJ_0001"/>
<dbReference type="EnsemblBacteria" id="AAB97984">
    <property type="protein sequence ID" value="AAB97984"/>
    <property type="gene ID" value="MJ_0001"/>
</dbReference>
<dbReference type="GeneID" id="1450840"/>
<dbReference type="KEGG" id="mja:MJ_0001"/>
<dbReference type="eggNOG" id="arCOG01130">
    <property type="taxonomic scope" value="Archaea"/>
</dbReference>
<dbReference type="HOGENOM" id="CLU_017584_4_3_2"/>
<dbReference type="InParanoid" id="Q60317"/>
<dbReference type="OrthoDB" id="372018at2157"/>
<dbReference type="PhylomeDB" id="Q60317"/>
<dbReference type="Proteomes" id="UP000000805">
    <property type="component" value="Chromosome"/>
</dbReference>
<dbReference type="GO" id="GO:0005737">
    <property type="term" value="C:cytoplasm"/>
    <property type="evidence" value="ECO:0007669"/>
    <property type="project" value="UniProtKB-SubCell"/>
</dbReference>
<dbReference type="GO" id="GO:0004069">
    <property type="term" value="F:L-aspartate:2-oxoglutarate aminotransferase activity"/>
    <property type="evidence" value="ECO:0007669"/>
    <property type="project" value="UniProtKB-EC"/>
</dbReference>
<dbReference type="GO" id="GO:0030170">
    <property type="term" value="F:pyridoxal phosphate binding"/>
    <property type="evidence" value="ECO:0007669"/>
    <property type="project" value="InterPro"/>
</dbReference>
<dbReference type="GO" id="GO:0008483">
    <property type="term" value="F:transaminase activity"/>
    <property type="evidence" value="ECO:0000318"/>
    <property type="project" value="GO_Central"/>
</dbReference>
<dbReference type="GO" id="GO:0006520">
    <property type="term" value="P:amino acid metabolic process"/>
    <property type="evidence" value="ECO:0007669"/>
    <property type="project" value="InterPro"/>
</dbReference>
<dbReference type="GO" id="GO:0009058">
    <property type="term" value="P:biosynthetic process"/>
    <property type="evidence" value="ECO:0007669"/>
    <property type="project" value="InterPro"/>
</dbReference>
<dbReference type="CDD" id="cd00609">
    <property type="entry name" value="AAT_like"/>
    <property type="match status" value="1"/>
</dbReference>
<dbReference type="FunFam" id="3.40.640.10:FF:000033">
    <property type="entry name" value="Aspartate aminotransferase"/>
    <property type="match status" value="1"/>
</dbReference>
<dbReference type="Gene3D" id="3.90.1150.10">
    <property type="entry name" value="Aspartate Aminotransferase, domain 1"/>
    <property type="match status" value="1"/>
</dbReference>
<dbReference type="Gene3D" id="3.40.640.10">
    <property type="entry name" value="Type I PLP-dependent aspartate aminotransferase-like (Major domain)"/>
    <property type="match status" value="1"/>
</dbReference>
<dbReference type="InterPro" id="IPR004839">
    <property type="entry name" value="Aminotransferase_I/II_large"/>
</dbReference>
<dbReference type="InterPro" id="IPR050596">
    <property type="entry name" value="AspAT/PAT-like"/>
</dbReference>
<dbReference type="InterPro" id="IPR004838">
    <property type="entry name" value="NHTrfase_class1_PyrdxlP-BS"/>
</dbReference>
<dbReference type="InterPro" id="IPR015424">
    <property type="entry name" value="PyrdxlP-dep_Trfase"/>
</dbReference>
<dbReference type="InterPro" id="IPR015421">
    <property type="entry name" value="PyrdxlP-dep_Trfase_major"/>
</dbReference>
<dbReference type="InterPro" id="IPR015422">
    <property type="entry name" value="PyrdxlP-dep_Trfase_small"/>
</dbReference>
<dbReference type="PANTHER" id="PTHR46383">
    <property type="entry name" value="ASPARTATE AMINOTRANSFERASE"/>
    <property type="match status" value="1"/>
</dbReference>
<dbReference type="PANTHER" id="PTHR46383:SF3">
    <property type="entry name" value="ASPARTATE AMINOTRANSFERASE-RELATED"/>
    <property type="match status" value="1"/>
</dbReference>
<dbReference type="Pfam" id="PF00155">
    <property type="entry name" value="Aminotran_1_2"/>
    <property type="match status" value="1"/>
</dbReference>
<dbReference type="SUPFAM" id="SSF53383">
    <property type="entry name" value="PLP-dependent transferases"/>
    <property type="match status" value="1"/>
</dbReference>
<dbReference type="PROSITE" id="PS00105">
    <property type="entry name" value="AA_TRANSFER_CLASS_1"/>
    <property type="match status" value="1"/>
</dbReference>
<comment type="catalytic activity">
    <reaction>
        <text>L-aspartate + 2-oxoglutarate = oxaloacetate + L-glutamate</text>
        <dbReference type="Rhea" id="RHEA:21824"/>
        <dbReference type="ChEBI" id="CHEBI:16452"/>
        <dbReference type="ChEBI" id="CHEBI:16810"/>
        <dbReference type="ChEBI" id="CHEBI:29985"/>
        <dbReference type="ChEBI" id="CHEBI:29991"/>
        <dbReference type="EC" id="2.6.1.1"/>
    </reaction>
</comment>
<comment type="cofactor">
    <cofactor evidence="1">
        <name>pyridoxal 5'-phosphate</name>
        <dbReference type="ChEBI" id="CHEBI:597326"/>
    </cofactor>
</comment>
<comment type="subunit">
    <text evidence="1">Homodimer.</text>
</comment>
<comment type="subcellular location">
    <subcellularLocation>
        <location evidence="1">Cytoplasm</location>
    </subcellularLocation>
</comment>
<comment type="similarity">
    <text evidence="2">Belongs to the class-I pyridoxal-phosphate-dependent aminotransferase family.</text>
</comment>
<protein>
    <recommendedName>
        <fullName>Probable aspartate aminotransferase</fullName>
        <shortName>AspAT</shortName>
        <ecNumber>2.6.1.1</ecNumber>
    </recommendedName>
    <alternativeName>
        <fullName>Transaminase A</fullName>
    </alternativeName>
</protein>
<organism>
    <name type="scientific">Methanocaldococcus jannaschii (strain ATCC 43067 / DSM 2661 / JAL-1 / JCM 10045 / NBRC 100440)</name>
    <name type="common">Methanococcus jannaschii</name>
    <dbReference type="NCBI Taxonomy" id="243232"/>
    <lineage>
        <taxon>Archaea</taxon>
        <taxon>Methanobacteriati</taxon>
        <taxon>Methanobacteriota</taxon>
        <taxon>Methanomada group</taxon>
        <taxon>Methanococci</taxon>
        <taxon>Methanococcales</taxon>
        <taxon>Methanocaldococcaceae</taxon>
        <taxon>Methanocaldococcus</taxon>
    </lineage>
</organism>
<gene>
    <name type="ordered locus">MJ0001</name>
</gene>
<feature type="chain" id="PRO_0000123858" description="Probable aspartate aminotransferase">
    <location>
        <begin position="1"/>
        <end position="375"/>
    </location>
</feature>
<feature type="binding site" evidence="1">
    <location>
        <position position="31"/>
    </location>
    <ligand>
        <name>L-aspartate</name>
        <dbReference type="ChEBI" id="CHEBI:29991"/>
    </ligand>
</feature>
<feature type="binding site" evidence="1">
    <location>
        <position position="165"/>
    </location>
    <ligand>
        <name>L-aspartate</name>
        <dbReference type="ChEBI" id="CHEBI:29991"/>
    </ligand>
</feature>
<feature type="binding site" evidence="1">
    <location>
        <position position="353"/>
    </location>
    <ligand>
        <name>L-aspartate</name>
        <dbReference type="ChEBI" id="CHEBI:29991"/>
    </ligand>
</feature>
<feature type="modified residue" description="N6-(pyridoxal phosphate)lysine" evidence="1">
    <location>
        <position position="223"/>
    </location>
</feature>
<reference key="1">
    <citation type="journal article" date="1996" name="Science">
        <title>Complete genome sequence of the methanogenic archaeon, Methanococcus jannaschii.</title>
        <authorList>
            <person name="Bult C.J."/>
            <person name="White O."/>
            <person name="Olsen G.J."/>
            <person name="Zhou L."/>
            <person name="Fleischmann R.D."/>
            <person name="Sutton G.G."/>
            <person name="Blake J.A."/>
            <person name="FitzGerald L.M."/>
            <person name="Clayton R.A."/>
            <person name="Gocayne J.D."/>
            <person name="Kerlavage A.R."/>
            <person name="Dougherty B.A."/>
            <person name="Tomb J.-F."/>
            <person name="Adams M.D."/>
            <person name="Reich C.I."/>
            <person name="Overbeek R."/>
            <person name="Kirkness E.F."/>
            <person name="Weinstock K.G."/>
            <person name="Merrick J.M."/>
            <person name="Glodek A."/>
            <person name="Scott J.L."/>
            <person name="Geoghagen N.S.M."/>
            <person name="Weidman J.F."/>
            <person name="Fuhrmann J.L."/>
            <person name="Nguyen D."/>
            <person name="Utterback T.R."/>
            <person name="Kelley J.M."/>
            <person name="Peterson J.D."/>
            <person name="Sadow P.W."/>
            <person name="Hanna M.C."/>
            <person name="Cotton M.D."/>
            <person name="Roberts K.M."/>
            <person name="Hurst M.A."/>
            <person name="Kaine B.P."/>
            <person name="Borodovsky M."/>
            <person name="Klenk H.-P."/>
            <person name="Fraser C.M."/>
            <person name="Smith H.O."/>
            <person name="Woese C.R."/>
            <person name="Venter J.C."/>
        </authorList>
    </citation>
    <scope>NUCLEOTIDE SEQUENCE [LARGE SCALE GENOMIC DNA]</scope>
    <source>
        <strain>ATCC 43067 / DSM 2661 / JAL-1 / JCM 10045 / NBRC 100440</strain>
    </source>
</reference>
<evidence type="ECO:0000250" key="1"/>
<evidence type="ECO:0000305" key="2"/>
<keyword id="KW-0032">Aminotransferase</keyword>
<keyword id="KW-0963">Cytoplasm</keyword>
<keyword id="KW-0663">Pyridoxal phosphate</keyword>
<keyword id="KW-1185">Reference proteome</keyword>
<keyword id="KW-0808">Transferase</keyword>
<sequence>MISSRCKNIKPSAIREIFNLATSDCINLGIGEPDFDTPKHIIEAAKRALDEGKTHYSPNNGIPELREEISNKLKDDYNLDVDKDNIIVTCGASEALMLSIMTLIDRGDEVLIPNPSFVSYFSLTEFAEGKIKNIDLDENFNIDLEKVKESITKKTKLIIFNSPSNPTGKVYDKETIKGLAEIAEDYNLIIVSDEVYDKIIYDKKHYSPMQFTDRCILINGFSKTYAMTGWRIGYLAVSDELNKELDLINNMIKIHQYSFACATTFAQYGALAALRGSQKCVEDMVREFKMRRDLIYNGLKDIFKVNKPDGAFYIFPDVSEYGDGVEVAKKLIENKVLCVPGVAFGENGANYIRFSYATKYEDIEKALGIIKEIFE</sequence>
<name>AAT_METJA</name>
<proteinExistence type="inferred from homology"/>